<feature type="chain" id="PRO_1000130733" description="Nucleotide-binding protein BCAH187_A5316">
    <location>
        <begin position="1"/>
        <end position="293"/>
    </location>
</feature>
<feature type="binding site" evidence="1">
    <location>
        <begin position="14"/>
        <end position="21"/>
    </location>
    <ligand>
        <name>ATP</name>
        <dbReference type="ChEBI" id="CHEBI:30616"/>
    </ligand>
</feature>
<feature type="binding site" evidence="1">
    <location>
        <begin position="65"/>
        <end position="68"/>
    </location>
    <ligand>
        <name>GTP</name>
        <dbReference type="ChEBI" id="CHEBI:37565"/>
    </ligand>
</feature>
<accession>B7HW83</accession>
<dbReference type="EMBL" id="CP001177">
    <property type="protein sequence ID" value="ACJ79153.1"/>
    <property type="molecule type" value="Genomic_DNA"/>
</dbReference>
<dbReference type="SMR" id="B7HW83"/>
<dbReference type="KEGG" id="bcr:BCAH187_A5316"/>
<dbReference type="HOGENOM" id="CLU_059558_0_0_9"/>
<dbReference type="Proteomes" id="UP000002214">
    <property type="component" value="Chromosome"/>
</dbReference>
<dbReference type="GO" id="GO:0005524">
    <property type="term" value="F:ATP binding"/>
    <property type="evidence" value="ECO:0007669"/>
    <property type="project" value="UniProtKB-UniRule"/>
</dbReference>
<dbReference type="GO" id="GO:0005525">
    <property type="term" value="F:GTP binding"/>
    <property type="evidence" value="ECO:0007669"/>
    <property type="project" value="UniProtKB-UniRule"/>
</dbReference>
<dbReference type="Gene3D" id="3.40.50.300">
    <property type="entry name" value="P-loop containing nucleotide triphosphate hydrolases"/>
    <property type="match status" value="1"/>
</dbReference>
<dbReference type="HAMAP" id="MF_00636">
    <property type="entry name" value="RapZ_like"/>
    <property type="match status" value="1"/>
</dbReference>
<dbReference type="InterPro" id="IPR027417">
    <property type="entry name" value="P-loop_NTPase"/>
</dbReference>
<dbReference type="InterPro" id="IPR005337">
    <property type="entry name" value="RapZ-like"/>
</dbReference>
<dbReference type="InterPro" id="IPR053930">
    <property type="entry name" value="RapZ-like_N"/>
</dbReference>
<dbReference type="InterPro" id="IPR053931">
    <property type="entry name" value="RapZ_C"/>
</dbReference>
<dbReference type="NCBIfam" id="NF003828">
    <property type="entry name" value="PRK05416.1"/>
    <property type="match status" value="1"/>
</dbReference>
<dbReference type="PANTHER" id="PTHR30448">
    <property type="entry name" value="RNASE ADAPTER PROTEIN RAPZ"/>
    <property type="match status" value="1"/>
</dbReference>
<dbReference type="PANTHER" id="PTHR30448:SF0">
    <property type="entry name" value="RNASE ADAPTER PROTEIN RAPZ"/>
    <property type="match status" value="1"/>
</dbReference>
<dbReference type="Pfam" id="PF22740">
    <property type="entry name" value="PapZ_C"/>
    <property type="match status" value="1"/>
</dbReference>
<dbReference type="Pfam" id="PF03668">
    <property type="entry name" value="RapZ-like_N"/>
    <property type="match status" value="1"/>
</dbReference>
<dbReference type="PIRSF" id="PIRSF005052">
    <property type="entry name" value="P-loopkin"/>
    <property type="match status" value="1"/>
</dbReference>
<dbReference type="SUPFAM" id="SSF52540">
    <property type="entry name" value="P-loop containing nucleoside triphosphate hydrolases"/>
    <property type="match status" value="1"/>
</dbReference>
<gene>
    <name type="ordered locus">BCAH187_A5316</name>
</gene>
<comment type="function">
    <text evidence="1">Displays ATPase and GTPase activities.</text>
</comment>
<comment type="similarity">
    <text evidence="1">Belongs to the RapZ-like family.</text>
</comment>
<reference key="1">
    <citation type="submission" date="2008-10" db="EMBL/GenBank/DDBJ databases">
        <title>Genome sequence of Bacillus cereus AH187.</title>
        <authorList>
            <person name="Dodson R.J."/>
            <person name="Durkin A.S."/>
            <person name="Rosovitz M.J."/>
            <person name="Rasko D.A."/>
            <person name="Kolsto A.B."/>
            <person name="Okstad O.A."/>
            <person name="Ravel J."/>
            <person name="Sutton G."/>
        </authorList>
    </citation>
    <scope>NUCLEOTIDE SEQUENCE [LARGE SCALE GENOMIC DNA]</scope>
    <source>
        <strain>AH187</strain>
    </source>
</reference>
<evidence type="ECO:0000255" key="1">
    <source>
        <dbReference type="HAMAP-Rule" id="MF_00636"/>
    </source>
</evidence>
<sequence>MTENNDIKMVIITGMSGAGKTVALQSFEDLGYFCVDNLPPMLLPKFIELMADSKGKMNKVALGIDLRGREFFEHLWEALDDLSERTWIIPHILFLDAKDSTLVTRYKETRRSHPLAPTGLPLKGIEAERNLLTDMKARANIVLDTSDLKPKELREKIVHLFSTETEQAFRVNVMSFGFKYGIPIDADLVFDVRFLPNPYYIPHMKPLTGLDEEVSSYVLKFNETHKFLEKLTDLITFMLPHYKREGKSQLVIAIGCTGGQHRSVTLTEYLGKHLKPEYSVHVSHRDVEKRKGH</sequence>
<protein>
    <recommendedName>
        <fullName evidence="1">Nucleotide-binding protein BCAH187_A5316</fullName>
    </recommendedName>
</protein>
<proteinExistence type="inferred from homology"/>
<organism>
    <name type="scientific">Bacillus cereus (strain AH187)</name>
    <dbReference type="NCBI Taxonomy" id="405534"/>
    <lineage>
        <taxon>Bacteria</taxon>
        <taxon>Bacillati</taxon>
        <taxon>Bacillota</taxon>
        <taxon>Bacilli</taxon>
        <taxon>Bacillales</taxon>
        <taxon>Bacillaceae</taxon>
        <taxon>Bacillus</taxon>
        <taxon>Bacillus cereus group</taxon>
    </lineage>
</organism>
<name>Y5316_BACC7</name>
<keyword id="KW-0067">ATP-binding</keyword>
<keyword id="KW-0342">GTP-binding</keyword>
<keyword id="KW-0547">Nucleotide-binding</keyword>